<name>BCCP_SOLLC</name>
<accession>P05115</accession>
<proteinExistence type="evidence at transcript level"/>
<dbReference type="EMBL" id="Y00144">
    <property type="protein sequence ID" value="CAA68339.1"/>
    <property type="molecule type" value="mRNA"/>
</dbReference>
<dbReference type="SMR" id="P05115"/>
<dbReference type="STRING" id="4081.P05115"/>
<dbReference type="PaxDb" id="4081-Solyc09g065540.2.1"/>
<dbReference type="eggNOG" id="KOG0238">
    <property type="taxonomic scope" value="Eukaryota"/>
</dbReference>
<dbReference type="InParanoid" id="P05115"/>
<dbReference type="UniPathway" id="UPA00094"/>
<dbReference type="Proteomes" id="UP000004994">
    <property type="component" value="Unplaced"/>
</dbReference>
<dbReference type="ExpressionAtlas" id="P05115">
    <property type="expression patterns" value="baseline and differential"/>
</dbReference>
<dbReference type="GO" id="GO:0009507">
    <property type="term" value="C:chloroplast"/>
    <property type="evidence" value="ECO:0007669"/>
    <property type="project" value="UniProtKB-SubCell"/>
</dbReference>
<dbReference type="GO" id="GO:0006633">
    <property type="term" value="P:fatty acid biosynthetic process"/>
    <property type="evidence" value="ECO:0007669"/>
    <property type="project" value="UniProtKB-UniPathway"/>
</dbReference>
<dbReference type="CDD" id="cd06850">
    <property type="entry name" value="biotinyl_domain"/>
    <property type="match status" value="1"/>
</dbReference>
<dbReference type="FunFam" id="2.40.50.100:FF:000003">
    <property type="entry name" value="Acetyl-CoA carboxylase biotin carboxyl carrier protein"/>
    <property type="match status" value="1"/>
</dbReference>
<dbReference type="Gene3D" id="2.40.50.100">
    <property type="match status" value="1"/>
</dbReference>
<dbReference type="InterPro" id="IPR001882">
    <property type="entry name" value="Biotin_BS"/>
</dbReference>
<dbReference type="InterPro" id="IPR050856">
    <property type="entry name" value="Biotin_carboxylase_complex"/>
</dbReference>
<dbReference type="InterPro" id="IPR000089">
    <property type="entry name" value="Biotin_lipoyl"/>
</dbReference>
<dbReference type="InterPro" id="IPR011053">
    <property type="entry name" value="Single_hybrid_motif"/>
</dbReference>
<dbReference type="PANTHER" id="PTHR18866">
    <property type="entry name" value="CARBOXYLASE:PYRUVATE/ACETYL-COA/PROPIONYL-COA CARBOXYLASE"/>
    <property type="match status" value="1"/>
</dbReference>
<dbReference type="PANTHER" id="PTHR18866:SF33">
    <property type="entry name" value="METHYLCROTONOYL-COA CARBOXYLASE SUBUNIT ALPHA, MITOCHONDRIAL-RELATED"/>
    <property type="match status" value="1"/>
</dbReference>
<dbReference type="Pfam" id="PF00364">
    <property type="entry name" value="Biotin_lipoyl"/>
    <property type="match status" value="1"/>
</dbReference>
<dbReference type="SUPFAM" id="SSF51230">
    <property type="entry name" value="Single hybrid motif"/>
    <property type="match status" value="1"/>
</dbReference>
<dbReference type="PROSITE" id="PS00188">
    <property type="entry name" value="BIOTIN"/>
    <property type="match status" value="1"/>
</dbReference>
<dbReference type="PROSITE" id="PS50968">
    <property type="entry name" value="BIOTINYL_LIPOYL"/>
    <property type="match status" value="1"/>
</dbReference>
<feature type="chain" id="PRO_0000146815" description="Biotin carboxyl carrier protein of acetyl-CoA carboxylase">
    <location>
        <begin position="1" status="less than"/>
        <end position="70"/>
    </location>
</feature>
<feature type="domain" description="Biotinyl-binding" evidence="2">
    <location>
        <begin position="1" status="less than"/>
        <end position="69"/>
    </location>
</feature>
<feature type="modified residue" description="N6-biotinyllysine" evidence="1 2">
    <location>
        <position position="35"/>
    </location>
</feature>
<feature type="non-terminal residue">
    <location>
        <position position="1"/>
    </location>
</feature>
<comment type="function">
    <text evidence="1">This protein is a component of the acetyl coenzyme A carboxylase complex; first, biotin carboxylase catalyzes the carboxylation of the carrier protein and then the transcarboxylase transfers the carboxyl group to form malonyl-CoA.</text>
</comment>
<comment type="pathway">
    <text>Lipid metabolism; fatty acid biosynthesis.</text>
</comment>
<comment type="subcellular location">
    <subcellularLocation>
        <location>Plastid</location>
        <location>Chloroplast</location>
    </subcellularLocation>
</comment>
<protein>
    <recommendedName>
        <fullName>Biotin carboxyl carrier protein of acetyl-CoA carboxylase</fullName>
        <shortName>BCCP</shortName>
    </recommendedName>
</protein>
<sequence length="70" mass="7416">GTVVAPMVGLEVKVLVKDGEKVQEGQPVLVLEAMKMEHVVKAPANGYVSGLEIKVGQSVQDGIKLFALKD</sequence>
<reference key="1">
    <citation type="journal article" date="1987" name="Nucleic Acids Res.">
        <title>A tomato cDNA encoding a biotin-binding protein.</title>
        <authorList>
            <person name="Hoffman N.E."/>
            <person name="Pichersky E."/>
            <person name="Cashmore A.R."/>
        </authorList>
    </citation>
    <scope>NUCLEOTIDE SEQUENCE [MRNA]</scope>
</reference>
<organism>
    <name type="scientific">Solanum lycopersicum</name>
    <name type="common">Tomato</name>
    <name type="synonym">Lycopersicon esculentum</name>
    <dbReference type="NCBI Taxonomy" id="4081"/>
    <lineage>
        <taxon>Eukaryota</taxon>
        <taxon>Viridiplantae</taxon>
        <taxon>Streptophyta</taxon>
        <taxon>Embryophyta</taxon>
        <taxon>Tracheophyta</taxon>
        <taxon>Spermatophyta</taxon>
        <taxon>Magnoliopsida</taxon>
        <taxon>eudicotyledons</taxon>
        <taxon>Gunneridae</taxon>
        <taxon>Pentapetalae</taxon>
        <taxon>asterids</taxon>
        <taxon>lamiids</taxon>
        <taxon>Solanales</taxon>
        <taxon>Solanaceae</taxon>
        <taxon>Solanoideae</taxon>
        <taxon>Solaneae</taxon>
        <taxon>Solanum</taxon>
        <taxon>Solanum subgen. Lycopersicon</taxon>
    </lineage>
</organism>
<evidence type="ECO:0000250" key="1"/>
<evidence type="ECO:0000255" key="2">
    <source>
        <dbReference type="PROSITE-ProRule" id="PRU01066"/>
    </source>
</evidence>
<keyword id="KW-0092">Biotin</keyword>
<keyword id="KW-0150">Chloroplast</keyword>
<keyword id="KW-0275">Fatty acid biosynthesis</keyword>
<keyword id="KW-0276">Fatty acid metabolism</keyword>
<keyword id="KW-0444">Lipid biosynthesis</keyword>
<keyword id="KW-0443">Lipid metabolism</keyword>
<keyword id="KW-0934">Plastid</keyword>
<keyword id="KW-1185">Reference proteome</keyword>